<name>PCS1N_HUMAN</name>
<sequence length="260" mass="27372">MAGSPLLWGPRAGGVGLLVLLLLGLFRPPPALCARPVKEPRGLSAASPPLAETGAPRRFRRSVPRGEAAGAVQELARALAHLLEAERQERARAEAQEAEDQQARVLAQLLRVWGAPRNSDPALGLDDDPDAPAAQLARALLRARLDPAALAAQLVPAPVPAAALRPRPPVYDDGPAGPDAEEAGDETPDVDPELLRYLLGRILAGSADSEGVAAPRRLRRAADHDVGSELPPEGVLGALLRVKRLETPAPQVPARRLLPP</sequence>
<dbReference type="EMBL" id="AF181562">
    <property type="protein sequence ID" value="AAF22643.1"/>
    <property type="molecule type" value="mRNA"/>
</dbReference>
<dbReference type="EMBL" id="BC002851">
    <property type="protein sequence ID" value="AAH02851.1"/>
    <property type="molecule type" value="mRNA"/>
</dbReference>
<dbReference type="CCDS" id="CCDS14307.1"/>
<dbReference type="RefSeq" id="NP_037403.1">
    <property type="nucleotide sequence ID" value="NM_013271.5"/>
</dbReference>
<dbReference type="SMR" id="Q9UHG2"/>
<dbReference type="BioGRID" id="118156">
    <property type="interactions" value="15"/>
</dbReference>
<dbReference type="FunCoup" id="Q9UHG2">
    <property type="interactions" value="287"/>
</dbReference>
<dbReference type="IntAct" id="Q9UHG2">
    <property type="interactions" value="16"/>
</dbReference>
<dbReference type="MINT" id="Q9UHG2"/>
<dbReference type="STRING" id="9606.ENSP00000218230"/>
<dbReference type="MEROPS" id="I49.001"/>
<dbReference type="GlyConnect" id="743">
    <property type="glycosylation" value="1 O-Linked glycan (3 sites)"/>
</dbReference>
<dbReference type="GlyCosmos" id="Q9UHG2">
    <property type="glycosylation" value="3 sites, 2 glycans"/>
</dbReference>
<dbReference type="GlyGen" id="Q9UHG2">
    <property type="glycosylation" value="4 sites, 4 O-linked glycans (4 sites)"/>
</dbReference>
<dbReference type="iPTMnet" id="Q9UHG2"/>
<dbReference type="PhosphoSitePlus" id="Q9UHG2"/>
<dbReference type="BioMuta" id="PCSK1N"/>
<dbReference type="DMDM" id="74735013"/>
<dbReference type="jPOST" id="Q9UHG2"/>
<dbReference type="MassIVE" id="Q9UHG2"/>
<dbReference type="PaxDb" id="9606-ENSP00000218230"/>
<dbReference type="PeptideAtlas" id="Q9UHG2"/>
<dbReference type="ProteomicsDB" id="84349"/>
<dbReference type="Antibodypedia" id="579">
    <property type="antibodies" value="87 antibodies from 19 providers"/>
</dbReference>
<dbReference type="DNASU" id="27344"/>
<dbReference type="Ensembl" id="ENST00000218230.6">
    <property type="protein sequence ID" value="ENSP00000218230.5"/>
    <property type="gene ID" value="ENSG00000102109.9"/>
</dbReference>
<dbReference type="GeneID" id="27344"/>
<dbReference type="KEGG" id="hsa:27344"/>
<dbReference type="MANE-Select" id="ENST00000218230.6">
    <property type="protein sequence ID" value="ENSP00000218230.5"/>
    <property type="RefSeq nucleotide sequence ID" value="NM_013271.5"/>
    <property type="RefSeq protein sequence ID" value="NP_037403.1"/>
</dbReference>
<dbReference type="UCSC" id="uc004dkz.6">
    <property type="organism name" value="human"/>
</dbReference>
<dbReference type="AGR" id="HGNC:17301"/>
<dbReference type="CTD" id="27344"/>
<dbReference type="DisGeNET" id="27344"/>
<dbReference type="GeneCards" id="PCSK1N"/>
<dbReference type="HGNC" id="HGNC:17301">
    <property type="gene designation" value="PCSK1N"/>
</dbReference>
<dbReference type="HPA" id="ENSG00000102109">
    <property type="expression patterns" value="Group enriched (brain, pituitary gland)"/>
</dbReference>
<dbReference type="MIM" id="300399">
    <property type="type" value="gene"/>
</dbReference>
<dbReference type="neXtProt" id="NX_Q9UHG2"/>
<dbReference type="OpenTargets" id="ENSG00000102109"/>
<dbReference type="PharmGKB" id="PA33090"/>
<dbReference type="VEuPathDB" id="HostDB:ENSG00000102109"/>
<dbReference type="eggNOG" id="ENOG502RYS0">
    <property type="taxonomic scope" value="Eukaryota"/>
</dbReference>
<dbReference type="GeneTree" id="ENSGT00390000013488"/>
<dbReference type="HOGENOM" id="CLU_100077_0_0_1"/>
<dbReference type="InParanoid" id="Q9UHG2"/>
<dbReference type="OMA" id="VWGAPRT"/>
<dbReference type="OrthoDB" id="8962476at2759"/>
<dbReference type="PAN-GO" id="Q9UHG2">
    <property type="GO annotations" value="2 GO annotations based on evolutionary models"/>
</dbReference>
<dbReference type="PhylomeDB" id="Q9UHG2"/>
<dbReference type="TreeFam" id="TF338201"/>
<dbReference type="PathwayCommons" id="Q9UHG2"/>
<dbReference type="SignaLink" id="Q9UHG2"/>
<dbReference type="BioGRID-ORCS" id="27344">
    <property type="hits" value="8 hits in 764 CRISPR screens"/>
</dbReference>
<dbReference type="GenomeRNAi" id="27344"/>
<dbReference type="Pharos" id="Q9UHG2">
    <property type="development level" value="Tbio"/>
</dbReference>
<dbReference type="PRO" id="PR:Q9UHG2"/>
<dbReference type="Proteomes" id="UP000005640">
    <property type="component" value="Chromosome X"/>
</dbReference>
<dbReference type="RNAct" id="Q9UHG2">
    <property type="molecule type" value="protein"/>
</dbReference>
<dbReference type="Bgee" id="ENSG00000102109">
    <property type="expression patterns" value="Expressed in adenohypophysis and 138 other cell types or tissues"/>
</dbReference>
<dbReference type="GO" id="GO:0005615">
    <property type="term" value="C:extracellular space"/>
    <property type="evidence" value="ECO:0000318"/>
    <property type="project" value="GO_Central"/>
</dbReference>
<dbReference type="GO" id="GO:0030141">
    <property type="term" value="C:secretory granule"/>
    <property type="evidence" value="ECO:0007669"/>
    <property type="project" value="Ensembl"/>
</dbReference>
<dbReference type="GO" id="GO:0005802">
    <property type="term" value="C:trans-Golgi network"/>
    <property type="evidence" value="ECO:0007669"/>
    <property type="project" value="Ensembl"/>
</dbReference>
<dbReference type="GO" id="GO:0004866">
    <property type="term" value="F:endopeptidase inhibitor activity"/>
    <property type="evidence" value="ECO:0000318"/>
    <property type="project" value="GO_Central"/>
</dbReference>
<dbReference type="GO" id="GO:0004867">
    <property type="term" value="F:serine-type endopeptidase inhibitor activity"/>
    <property type="evidence" value="ECO:0007669"/>
    <property type="project" value="Ensembl"/>
</dbReference>
<dbReference type="GO" id="GO:0005102">
    <property type="term" value="F:signaling receptor binding"/>
    <property type="evidence" value="ECO:0000304"/>
    <property type="project" value="ProtInc"/>
</dbReference>
<dbReference type="GO" id="GO:0007218">
    <property type="term" value="P:neuropeptide signaling pathway"/>
    <property type="evidence" value="ECO:0007669"/>
    <property type="project" value="UniProtKB-KW"/>
</dbReference>
<dbReference type="GO" id="GO:0016486">
    <property type="term" value="P:peptide hormone processing"/>
    <property type="evidence" value="ECO:0007669"/>
    <property type="project" value="Ensembl"/>
</dbReference>
<dbReference type="GO" id="GO:0009409">
    <property type="term" value="P:response to cold"/>
    <property type="evidence" value="ECO:0007669"/>
    <property type="project" value="Ensembl"/>
</dbReference>
<dbReference type="GO" id="GO:0002021">
    <property type="term" value="P:response to dietary excess"/>
    <property type="evidence" value="ECO:0007669"/>
    <property type="project" value="Ensembl"/>
</dbReference>
<dbReference type="InterPro" id="IPR010832">
    <property type="entry name" value="ProSAAS"/>
</dbReference>
<dbReference type="PANTHER" id="PTHR15531">
    <property type="entry name" value="PROSAAS"/>
    <property type="match status" value="1"/>
</dbReference>
<dbReference type="PANTHER" id="PTHR15531:SF0">
    <property type="entry name" value="PROSAAS"/>
    <property type="match status" value="1"/>
</dbReference>
<dbReference type="Pfam" id="PF07259">
    <property type="entry name" value="ProSAAS"/>
    <property type="match status" value="1"/>
</dbReference>
<reference key="1">
    <citation type="journal article" date="2000" name="J. Neurosci.">
        <title>Identification and characterization of proSAAS, a granin-like neuroendocrine peptide precursor that inhibits prohormone processing.</title>
        <authorList>
            <person name="Fricker L."/>
            <person name="McKinzie A.A."/>
            <person name="Sun J."/>
            <person name="Curran E."/>
            <person name="Qian Y."/>
            <person name="Yan L."/>
            <person name="Patterson S.D."/>
            <person name="Courchesne P.L."/>
            <person name="Richards B."/>
            <person name="Levin N."/>
            <person name="Mzhavia N."/>
            <person name="Devi L.A."/>
            <person name="Douglass J."/>
        </authorList>
    </citation>
    <scope>NUCLEOTIDE SEQUENCE [MRNA]</scope>
    <scope>TISSUE SPECIFICITY</scope>
</reference>
<reference key="2">
    <citation type="journal article" date="2004" name="Genome Res.">
        <title>The status, quality, and expansion of the NIH full-length cDNA project: the Mammalian Gene Collection (MGC).</title>
        <authorList>
            <consortium name="The MGC Project Team"/>
        </authorList>
    </citation>
    <scope>NUCLEOTIDE SEQUENCE [LARGE SCALE MRNA]</scope>
    <scope>VARIANT THR-31</scope>
    <source>
        <tissue>Brain</tissue>
        <tissue>Uterus</tissue>
    </source>
</reference>
<reference key="3">
    <citation type="journal article" date="2001" name="J. Biol. Chem.">
        <title>Inhibitory specificity and potency of proSAAS-derived peptides toward proprotein convertase 1.</title>
        <authorList>
            <person name="Basak A."/>
            <person name="Koch P."/>
            <person name="Dupelle M."/>
            <person name="Fricker L.D."/>
            <person name="Devi L.A."/>
            <person name="Chretien M."/>
            <person name="Seidah N.G."/>
        </authorList>
    </citation>
    <scope>MUTAGENESIS OF VAL-235; LEU-236; GLY-237; LEU-240; ARG-241; VAL-242; LYS-243; ARG-244; LEU-245 AND GLU-246</scope>
</reference>
<reference key="4">
    <citation type="journal article" date="2003" name="Biochem. Biophys. Res. Commun.">
        <title>An N-terminal fragment of ProSAAS (a granin-like neuroendocrine peptide precursor) is associated with tau inclusions in Pick's disease.</title>
        <authorList>
            <person name="Kikuchi K."/>
            <person name="Arawaka S."/>
            <person name="Koyama S."/>
            <person name="Kimura H."/>
            <person name="Ren C.H."/>
            <person name="Wada M."/>
            <person name="Kawanami T."/>
            <person name="Kurita K."/>
            <person name="Daimon M."/>
            <person name="Kawakatsu S."/>
            <person name="Kadoya T."/>
            <person name="Goto K."/>
            <person name="Kato T."/>
        </authorList>
    </citation>
    <scope>SUBCELLULAR LOCATION (PROTEIN TAU DEPOSITS)</scope>
    <scope>PROTEOLYTIC PROCESSING</scope>
</reference>
<reference key="5">
    <citation type="journal article" date="2004" name="Neurosci. Lett.">
        <title>A human granin-like neuroendocrine peptide precursor (proSAAS) immunoreactivity in tau inclusions of Alzheimer's disease and parkinsonism-dementia complex on Guam.</title>
        <authorList>
            <person name="Wada M."/>
            <person name="Ren C.H."/>
            <person name="Koyama S."/>
            <person name="Arawaka S."/>
            <person name="Kawakatsu S."/>
            <person name="Kimura H."/>
            <person name="Nagasawa H."/>
            <person name="Kawanami T."/>
            <person name="Kurita K."/>
            <person name="Daimon M."/>
            <person name="Hirano A."/>
            <person name="Kato T."/>
        </authorList>
    </citation>
    <scope>SUBCELLULAR LOCATION (PROTEIN TAU DEPOSITS)</scope>
</reference>
<reference key="6">
    <citation type="journal article" date="2009" name="Nat. Methods">
        <title>Enrichment of glycopeptides for glycan structure and attachment site identification.</title>
        <authorList>
            <person name="Nilsson J."/>
            <person name="Rueetschi U."/>
            <person name="Halim A."/>
            <person name="Hesse C."/>
            <person name="Carlsohn E."/>
            <person name="Brinkmalm G."/>
            <person name="Larson G."/>
        </authorList>
    </citation>
    <scope>GLYCOSYLATION [LARGE SCALE ANALYSIS] AT THR-53 AND THR-247</scope>
    <scope>STRUCTURE OF CARBOHYDRATES</scope>
    <source>
        <tissue>Cerebrospinal fluid</tissue>
    </source>
</reference>
<reference key="7">
    <citation type="journal article" date="2012" name="Mol. Cell. Proteomics">
        <title>Human urinary glycoproteomics; attachment site specific analysis of N- and O-linked glycosylations by CID and ECD.</title>
        <authorList>
            <person name="Halim A."/>
            <person name="Nilsson J."/>
            <person name="Ruetschi U."/>
            <person name="Hesse C."/>
            <person name="Larson G."/>
        </authorList>
    </citation>
    <scope>GLYCOSYLATION AT THR-53; SER-228 AND THR-247</scope>
    <scope>STRUCTURE OF CARBOHYDRATES</scope>
    <scope>IDENTIFICATION BY MASS SPECTROMETRY</scope>
</reference>
<reference key="8">
    <citation type="journal article" date="2013" name="J. Proteome Res.">
        <title>LC-MS/MS characterization of O-glycosylation sites and glycan structures of human cerebrospinal fluid glycoproteins.</title>
        <authorList>
            <person name="Halim A."/>
            <person name="Ruetschi U."/>
            <person name="Larson G."/>
            <person name="Nilsson J."/>
        </authorList>
    </citation>
    <scope>GLYCOSYLATION AT SER-228</scope>
    <scope>IDENTIFICATION BY MASS SPECTROMETRY</scope>
</reference>
<feature type="signal peptide" evidence="3">
    <location>
        <begin position="1"/>
        <end position="33"/>
    </location>
</feature>
<feature type="chain" id="PRO_0000259673" description="ProSAAS">
    <location>
        <begin position="34"/>
        <end position="260"/>
    </location>
</feature>
<feature type="peptide" id="PRO_0000259675" description="Big SAAS" evidence="1">
    <location>
        <begin position="34"/>
        <end position="59"/>
    </location>
</feature>
<feature type="peptide" id="PRO_0000259674" description="KEP" evidence="1">
    <location>
        <begin position="34"/>
        <end position="40"/>
    </location>
</feature>
<feature type="peptide" id="PRO_0000259676" description="Little SAAS" evidence="1">
    <location>
        <begin position="42"/>
        <end position="59"/>
    </location>
</feature>
<feature type="peptide" id="PRO_0000259677" description="Big PEN-LEN" evidence="1">
    <location>
        <begin position="221"/>
        <end position="260"/>
    </location>
</feature>
<feature type="peptide" id="PRO_0000259678" description="PEN" evidence="1">
    <location>
        <begin position="221"/>
        <end position="242"/>
    </location>
</feature>
<feature type="peptide" id="PRO_0000259679" description="Big LEN" evidence="1">
    <location>
        <begin position="245"/>
        <end position="260"/>
    </location>
</feature>
<feature type="peptide" id="PRO_0000259680" description="Little LEN" evidence="1">
    <location>
        <begin position="245"/>
        <end position="254"/>
    </location>
</feature>
<feature type="region of interest" description="ProSAAS(1-180)" evidence="1">
    <location>
        <begin position="34"/>
        <end position="215"/>
    </location>
</feature>
<feature type="region of interest" description="Disordered" evidence="4">
    <location>
        <begin position="165"/>
        <end position="188"/>
    </location>
</feature>
<feature type="region of interest" description="C-terminal inhibitory domain; interacts with PCSK1" evidence="1">
    <location>
        <begin position="221"/>
        <end position="260"/>
    </location>
</feature>
<feature type="short sequence motif" description="Sufficient for inhibition of PCSK1">
    <location>
        <begin position="239"/>
        <end position="244"/>
    </location>
</feature>
<feature type="compositionally biased region" description="Acidic residues" evidence="4">
    <location>
        <begin position="179"/>
        <end position="188"/>
    </location>
</feature>
<feature type="glycosylation site" description="O-linked (GalNAc...) threonine" evidence="10 11">
    <location>
        <position position="53"/>
    </location>
</feature>
<feature type="glycosylation site" description="O-linked (GalNAc...) serine" evidence="11 12">
    <location>
        <position position="228"/>
    </location>
</feature>
<feature type="glycosylation site" description="O-linked (GalNAc...) threonine" evidence="10 11">
    <location>
        <position position="247"/>
    </location>
</feature>
<feature type="sequence variant" id="VAR_028971" description="In dbSNP:rs11538176." evidence="9">
    <original>A</original>
    <variation>T</variation>
    <location>
        <position position="31"/>
    </location>
</feature>
<feature type="mutagenesis site" description="Reduces inhibition of PCSK1." evidence="6">
    <original>V</original>
    <variation>A</variation>
    <location>
        <position position="235"/>
    </location>
</feature>
<feature type="mutagenesis site" description="Greatly reduces inhibition of PCSK1." evidence="6">
    <original>L</original>
    <variation>A</variation>
    <location>
        <position position="236"/>
    </location>
</feature>
<feature type="mutagenesis site" description="Reduces inhibition of PCSK1." evidence="6">
    <original>G</original>
    <variation>A</variation>
    <location>
        <position position="237"/>
    </location>
</feature>
<feature type="mutagenesis site" description="Reduces inhibition of PCSK1." evidence="6">
    <original>L</original>
    <variation>A</variation>
    <location>
        <position position="240"/>
    </location>
</feature>
<feature type="mutagenesis site" description="Reduces inhibition of PCSK1." evidence="6">
    <original>R</original>
    <variation>A</variation>
    <location>
        <position position="241"/>
    </location>
</feature>
<feature type="mutagenesis site" description="Reduces inhibition of PCSK1." evidence="6">
    <original>V</original>
    <variation>A</variation>
    <location>
        <position position="242"/>
    </location>
</feature>
<feature type="mutagenesis site" description="Abolishes inhibition of PCSK1." evidence="6">
    <original>K</original>
    <variation>A</variation>
    <location>
        <position position="243"/>
    </location>
</feature>
<feature type="mutagenesis site" description="Abolishes inhibition of PCSK1." evidence="6">
    <original>R</original>
    <variation>A</variation>
    <location>
        <position position="244"/>
    </location>
</feature>
<feature type="mutagenesis site" description="Reduces inhibition of PCSK1." evidence="6">
    <original>L</original>
    <variation>A</variation>
    <location>
        <position position="245"/>
    </location>
</feature>
<feature type="mutagenesis site" description="Reduces inhibition of PCSK1." evidence="6">
    <original>E</original>
    <variation>A</variation>
    <location>
        <position position="246"/>
    </location>
</feature>
<gene>
    <name type="primary">PCSK1N</name>
</gene>
<comment type="function">
    <text evidence="2">May function in the control of the neuroendocrine secretory pathway. Proposed be a specific endogenous inhibitor of PCSK1. ProSAAS and Big PEN-LEN, both containing the C-terminal inhibitory domain, but not the further processed peptides reduce PCSK1 activity in the endoplasmic reticulum and Golgi. It reduces the activity of the 84 kDa form but not the autocatalytically derived 66 kDa form of PCSK1. Subsequent processing of proSAAS may eliminate the inhibition. Slows down convertase-mediated processing of proopiomelanocortin and proenkephalin. May control the intracellular timing of PCSK1 rather than its total level of activity (By similarity).</text>
</comment>
<comment type="function">
    <molecule>Big LEN</molecule>
    <text evidence="2">Endogenous ligand for GPR171. Neuropeptide involved in the regulation of feeding.</text>
</comment>
<comment type="function">
    <molecule>PEN</molecule>
    <text evidence="2">Endogenous ligand for GPR171. Neuropeptide involved in the regulation of feeding.</text>
</comment>
<comment type="subunit">
    <text evidence="1">Interacts via the C-terminal inhibitory domain with PCSK1 66 kDa form.</text>
</comment>
<comment type="subcellular location">
    <subcellularLocation>
        <location evidence="2">Secreted</location>
    </subcellularLocation>
    <subcellularLocation>
        <location evidence="2">Golgi apparatus</location>
        <location evidence="2">trans-Golgi network</location>
    </subcellularLocation>
    <text evidence="7 8">A N-terminal processed peptide, probably Big SAAS or Little SAAS, is accumulated in cytoplasmic protein tau deposits in frontotemporal dementia and parkinsonism linked to chromosome 17 (Pick disease), Alzheimer disease and amyotrophic lateral sclerosis-parkinsonism/dementia complex 1 (Guam disease).</text>
</comment>
<comment type="tissue specificity">
    <text evidence="5">Expressed in brain and pancreas.</text>
</comment>
<comment type="domain">
    <text evidence="1">ProSAAS(1-180) increases secretion of enzymatically inactive PCSK1.</text>
</comment>
<comment type="domain">
    <text evidence="1">The C-terminal inhibitory domain is involved in inhibition of PCSK1. It corresponds to the probable processing intermediate Big PEN-LEN, binds to PCSK1 in vitro and contains the hexapeptide L-L-R-V-K-R, which, as a synthetic peptide, is sufficient for PCSK1 inhibition (By similarity).</text>
</comment>
<comment type="domain">
    <molecule>Big LEN</molecule>
    <text evidence="2">The four C-terminal amino acids of Big LEN are sufficient to bind and activate GPR171.</text>
</comment>
<comment type="PTM">
    <text evidence="7">Proteolytically cleaved in the Golgi.</text>
</comment>
<comment type="PTM">
    <text evidence="10 11 12">O-glycosylated with a core 1 or possibly core 8 glycan.</text>
</comment>
<organism>
    <name type="scientific">Homo sapiens</name>
    <name type="common">Human</name>
    <dbReference type="NCBI Taxonomy" id="9606"/>
    <lineage>
        <taxon>Eukaryota</taxon>
        <taxon>Metazoa</taxon>
        <taxon>Chordata</taxon>
        <taxon>Craniata</taxon>
        <taxon>Vertebrata</taxon>
        <taxon>Euteleostomi</taxon>
        <taxon>Mammalia</taxon>
        <taxon>Eutheria</taxon>
        <taxon>Euarchontoglires</taxon>
        <taxon>Primates</taxon>
        <taxon>Haplorrhini</taxon>
        <taxon>Catarrhini</taxon>
        <taxon>Hominidae</taxon>
        <taxon>Homo</taxon>
    </lineage>
</organism>
<protein>
    <recommendedName>
        <fullName>ProSAAS</fullName>
    </recommendedName>
    <alternativeName>
        <fullName>Proprotein convertase subtilisin/kexin type 1 inhibitor</fullName>
        <shortName>Proprotein convertase 1 inhibitor</shortName>
    </alternativeName>
    <alternativeName>
        <fullName>pro-SAAS</fullName>
    </alternativeName>
    <component>
        <recommendedName>
            <fullName>KEP</fullName>
        </recommendedName>
    </component>
    <component>
        <recommendedName>
            <fullName>Big SAAS</fullName>
            <shortName>b-SAAS</shortName>
        </recommendedName>
    </component>
    <component>
        <recommendedName>
            <fullName>Little SAAS</fullName>
            <shortName>l-SAAS</shortName>
        </recommendedName>
        <alternativeName>
            <fullName>N-proSAAS</fullName>
        </alternativeName>
    </component>
    <component>
        <recommendedName>
            <fullName>Big PEN-LEN</fullName>
            <shortName>b-PEN-LEN</shortName>
        </recommendedName>
        <alternativeName>
            <fullName>SAAS CT(1-49)</fullName>
        </alternativeName>
    </component>
    <component>
        <recommendedName>
            <fullName>PEN</fullName>
        </recommendedName>
    </component>
    <component>
        <recommendedName>
            <fullName>Little LEN</fullName>
            <shortName>l-LEN</shortName>
        </recommendedName>
    </component>
    <component>
        <recommendedName>
            <fullName>Big LEN</fullName>
            <shortName>b-LEN</shortName>
        </recommendedName>
        <alternativeName>
            <fullName>SAAS CT(25-40)</fullName>
        </alternativeName>
    </component>
</protein>
<keyword id="KW-0165">Cleavage on pair of basic residues</keyword>
<keyword id="KW-0325">Glycoprotein</keyword>
<keyword id="KW-0333">Golgi apparatus</keyword>
<keyword id="KW-0527">Neuropeptide</keyword>
<keyword id="KW-1267">Proteomics identification</keyword>
<keyword id="KW-1185">Reference proteome</keyword>
<keyword id="KW-0964">Secreted</keyword>
<keyword id="KW-0732">Signal</keyword>
<evidence type="ECO:0000250" key="1"/>
<evidence type="ECO:0000250" key="2">
    <source>
        <dbReference type="UniProtKB" id="Q9QXV0"/>
    </source>
</evidence>
<evidence type="ECO:0000255" key="3"/>
<evidence type="ECO:0000256" key="4">
    <source>
        <dbReference type="SAM" id="MobiDB-lite"/>
    </source>
</evidence>
<evidence type="ECO:0000269" key="5">
    <source>
    </source>
</evidence>
<evidence type="ECO:0000269" key="6">
    <source>
    </source>
</evidence>
<evidence type="ECO:0000269" key="7">
    <source>
    </source>
</evidence>
<evidence type="ECO:0000269" key="8">
    <source>
    </source>
</evidence>
<evidence type="ECO:0000269" key="9">
    <source>
    </source>
</evidence>
<evidence type="ECO:0000269" key="10">
    <source>
    </source>
</evidence>
<evidence type="ECO:0000269" key="11">
    <source>
    </source>
</evidence>
<evidence type="ECO:0000269" key="12">
    <source>
    </source>
</evidence>
<proteinExistence type="evidence at protein level"/>
<accession>Q9UHG2</accession>
<accession>Q4VC04</accession>